<protein>
    <recommendedName>
        <fullName evidence="1">Tyrosine recombinase XerS</fullName>
    </recommendedName>
</protein>
<accession>B5E4Q4</accession>
<proteinExistence type="inferred from homology"/>
<comment type="function">
    <text evidence="1">Site-specific tyrosine recombinase, which acts by catalyzing the cutting and rejoining of the recombining DNA molecules. Essential to convert dimers of the bacterial chromosome into monomers to permit their segregation at cell division.</text>
</comment>
<comment type="activity regulation">
    <text evidence="1">FtsK is required for recombination.</text>
</comment>
<comment type="subcellular location">
    <subcellularLocation>
        <location evidence="1">Cytoplasm</location>
    </subcellularLocation>
</comment>
<comment type="similarity">
    <text evidence="1">Belongs to the 'phage' integrase family. XerS subfamily.</text>
</comment>
<evidence type="ECO:0000255" key="1">
    <source>
        <dbReference type="HAMAP-Rule" id="MF_01816"/>
    </source>
</evidence>
<evidence type="ECO:0000255" key="2">
    <source>
        <dbReference type="PROSITE-ProRule" id="PRU01246"/>
    </source>
</evidence>
<evidence type="ECO:0000255" key="3">
    <source>
        <dbReference type="PROSITE-ProRule" id="PRU01248"/>
    </source>
</evidence>
<dbReference type="EMBL" id="CP001015">
    <property type="protein sequence ID" value="ACF56147.1"/>
    <property type="molecule type" value="Genomic_DNA"/>
</dbReference>
<dbReference type="KEGG" id="spx:SPG_1060"/>
<dbReference type="HOGENOM" id="CLU_027562_9_6_9"/>
<dbReference type="GO" id="GO:0005737">
    <property type="term" value="C:cytoplasm"/>
    <property type="evidence" value="ECO:0007669"/>
    <property type="project" value="UniProtKB-SubCell"/>
</dbReference>
<dbReference type="GO" id="GO:0003677">
    <property type="term" value="F:DNA binding"/>
    <property type="evidence" value="ECO:0007669"/>
    <property type="project" value="UniProtKB-KW"/>
</dbReference>
<dbReference type="GO" id="GO:0009037">
    <property type="term" value="F:tyrosine-based site-specific recombinase activity"/>
    <property type="evidence" value="ECO:0007669"/>
    <property type="project" value="UniProtKB-UniRule"/>
</dbReference>
<dbReference type="GO" id="GO:0051301">
    <property type="term" value="P:cell division"/>
    <property type="evidence" value="ECO:0007669"/>
    <property type="project" value="UniProtKB-KW"/>
</dbReference>
<dbReference type="GO" id="GO:0007059">
    <property type="term" value="P:chromosome segregation"/>
    <property type="evidence" value="ECO:0007669"/>
    <property type="project" value="UniProtKB-UniRule"/>
</dbReference>
<dbReference type="GO" id="GO:0006310">
    <property type="term" value="P:DNA recombination"/>
    <property type="evidence" value="ECO:0007669"/>
    <property type="project" value="UniProtKB-UniRule"/>
</dbReference>
<dbReference type="Gene3D" id="1.10.150.130">
    <property type="match status" value="1"/>
</dbReference>
<dbReference type="Gene3D" id="1.10.443.10">
    <property type="entry name" value="Intergrase catalytic core"/>
    <property type="match status" value="1"/>
</dbReference>
<dbReference type="HAMAP" id="MF_01816">
    <property type="entry name" value="Recomb_XerS"/>
    <property type="match status" value="1"/>
</dbReference>
<dbReference type="InterPro" id="IPR044068">
    <property type="entry name" value="CB"/>
</dbReference>
<dbReference type="InterPro" id="IPR011010">
    <property type="entry name" value="DNA_brk_join_enz"/>
</dbReference>
<dbReference type="InterPro" id="IPR013762">
    <property type="entry name" value="Integrase-like_cat_sf"/>
</dbReference>
<dbReference type="InterPro" id="IPR002104">
    <property type="entry name" value="Integrase_catalytic"/>
</dbReference>
<dbReference type="InterPro" id="IPR010998">
    <property type="entry name" value="Integrase_recombinase_N"/>
</dbReference>
<dbReference type="InterPro" id="IPR023670">
    <property type="entry name" value="Recomb_XerS"/>
</dbReference>
<dbReference type="InterPro" id="IPR050090">
    <property type="entry name" value="Tyrosine_recombinase_XerCD"/>
</dbReference>
<dbReference type="NCBIfam" id="NF003462">
    <property type="entry name" value="PRK05084.1"/>
    <property type="match status" value="1"/>
</dbReference>
<dbReference type="PANTHER" id="PTHR30349">
    <property type="entry name" value="PHAGE INTEGRASE-RELATED"/>
    <property type="match status" value="1"/>
</dbReference>
<dbReference type="PANTHER" id="PTHR30349:SF77">
    <property type="entry name" value="TYROSINE RECOMBINASE XERC"/>
    <property type="match status" value="1"/>
</dbReference>
<dbReference type="Pfam" id="PF00589">
    <property type="entry name" value="Phage_integrase"/>
    <property type="match status" value="1"/>
</dbReference>
<dbReference type="SUPFAM" id="SSF56349">
    <property type="entry name" value="DNA breaking-rejoining enzymes"/>
    <property type="match status" value="1"/>
</dbReference>
<dbReference type="PROSITE" id="PS51900">
    <property type="entry name" value="CB"/>
    <property type="match status" value="1"/>
</dbReference>
<dbReference type="PROSITE" id="PS51898">
    <property type="entry name" value="TYR_RECOMBINASE"/>
    <property type="match status" value="1"/>
</dbReference>
<reference key="1">
    <citation type="journal article" date="2001" name="Microb. Drug Resist.">
        <title>Annotated draft genomic sequence from a Streptococcus pneumoniae type 19F clinical isolate.</title>
        <authorList>
            <person name="Dopazo J."/>
            <person name="Mendoza A."/>
            <person name="Herrero J."/>
            <person name="Caldara F."/>
            <person name="Humbert Y."/>
            <person name="Friedli L."/>
            <person name="Guerrier M."/>
            <person name="Grand-Schenk E."/>
            <person name="Gandin C."/>
            <person name="de Francesco M."/>
            <person name="Polissi A."/>
            <person name="Buell G."/>
            <person name="Feger G."/>
            <person name="Garcia E."/>
            <person name="Peitsch M."/>
            <person name="Garcia-Bustos J.F."/>
        </authorList>
    </citation>
    <scope>NUCLEOTIDE SEQUENCE [LARGE SCALE GENOMIC DNA]</scope>
    <source>
        <strain>G54</strain>
    </source>
</reference>
<reference key="2">
    <citation type="submission" date="2008-03" db="EMBL/GenBank/DDBJ databases">
        <title>Pneumococcal beta glucoside metabolism investigated by whole genome comparison.</title>
        <authorList>
            <person name="Mulas L."/>
            <person name="Trappetti C."/>
            <person name="Hakenbeck R."/>
            <person name="Iannelli F."/>
            <person name="Pozzi G."/>
            <person name="Davidsen T.M."/>
            <person name="Tettelin H."/>
            <person name="Oggioni M."/>
        </authorList>
    </citation>
    <scope>NUCLEOTIDE SEQUENCE [LARGE SCALE GENOMIC DNA]</scope>
    <source>
        <strain>G54</strain>
    </source>
</reference>
<gene>
    <name evidence="1" type="primary">xerS</name>
    <name type="ordered locus">SPG_1060</name>
</gene>
<organism>
    <name type="scientific">Streptococcus pneumoniae serotype 19F (strain G54)</name>
    <dbReference type="NCBI Taxonomy" id="512566"/>
    <lineage>
        <taxon>Bacteria</taxon>
        <taxon>Bacillati</taxon>
        <taxon>Bacillota</taxon>
        <taxon>Bacilli</taxon>
        <taxon>Lactobacillales</taxon>
        <taxon>Streptococcaceae</taxon>
        <taxon>Streptococcus</taxon>
    </lineage>
</organism>
<sequence>MKREILLERIDKLKQLMPWYVLEYYQSKLAVPYSFTTLYEYLKEYDRFFSWVLESGISNADKISDIPLSVLENMSKKDMESFILYXRERPLLNANTTKQGVSQTTINRTLSALSSLYKYLTEEVENDQGEPYFYRNVMKKVSTKKKKETLAARAENIKQKLFLGDETEGFLTYIDQEHPQQLSNRALSSFNKNKERDLAIIALLLASGVRLSEAVNLDLRDLNLKMMVIDVTRKGGKRDSVNVAAFAKPYLENYLAIRNQRYKTEKTDTALFLTLYRGVPNRIDASSVEKMVAKYSEDFKVRVTPHKLRHTLATRLYDATKSQVLVSHQLGHASTQVTDLYTHIVNDEQKNALDSL</sequence>
<name>XERS_STRP4</name>
<feature type="chain" id="PRO_1000187913" description="Tyrosine recombinase XerS">
    <location>
        <begin position="1"/>
        <end position="356"/>
    </location>
</feature>
<feature type="domain" description="Core-binding (CB)" evidence="3">
    <location>
        <begin position="16"/>
        <end position="121"/>
    </location>
</feature>
<feature type="domain" description="Tyr recombinase" evidence="2">
    <location>
        <begin position="169"/>
        <end position="354"/>
    </location>
</feature>
<feature type="active site" evidence="1">
    <location>
        <position position="210"/>
    </location>
</feature>
<feature type="active site" evidence="1">
    <location>
        <position position="234"/>
    </location>
</feature>
<feature type="active site" evidence="1">
    <location>
        <position position="306"/>
    </location>
</feature>
<feature type="active site" evidence="1">
    <location>
        <position position="309"/>
    </location>
</feature>
<feature type="active site" evidence="1">
    <location>
        <position position="332"/>
    </location>
</feature>
<feature type="active site" description="O-(3'-phospho-DNA)-tyrosine intermediate" evidence="1">
    <location>
        <position position="341"/>
    </location>
</feature>
<keyword id="KW-0131">Cell cycle</keyword>
<keyword id="KW-0132">Cell division</keyword>
<keyword id="KW-0159">Chromosome partition</keyword>
<keyword id="KW-0963">Cytoplasm</keyword>
<keyword id="KW-0229">DNA integration</keyword>
<keyword id="KW-0233">DNA recombination</keyword>
<keyword id="KW-0238">DNA-binding</keyword>